<feature type="signal peptide" evidence="2">
    <location>
        <begin position="1"/>
        <end position="22"/>
    </location>
</feature>
<feature type="propeptide" id="PRO_0000400775" evidence="1">
    <location>
        <begin position="23"/>
        <end position="48"/>
    </location>
</feature>
<feature type="peptide" id="PRO_0000400776" description="U4-theraphotoxin-Hhn1z">
    <location>
        <begin position="49"/>
        <end position="85"/>
    </location>
</feature>
<feature type="disulfide bond" evidence="1">
    <location>
        <begin position="52"/>
        <end position="66"/>
    </location>
</feature>
<feature type="disulfide bond" evidence="1">
    <location>
        <begin position="56"/>
        <end position="77"/>
    </location>
</feature>
<feature type="disulfide bond" evidence="1">
    <location>
        <begin position="71"/>
        <end position="82"/>
    </location>
</feature>
<accession>D2Y217</accession>
<comment type="function">
    <text evidence="1">Postsynaptic neurotoxin.</text>
</comment>
<comment type="subcellular location">
    <subcellularLocation>
        <location evidence="1">Secreted</location>
    </subcellularLocation>
</comment>
<comment type="tissue specificity">
    <text>Expressed by the venom gland.</text>
</comment>
<comment type="similarity">
    <text evidence="3">Belongs to the neurotoxin 12 (Hwtx-2) family. 02 (Hwtx-2) subfamily.</text>
</comment>
<organism>
    <name type="scientific">Cyriopagopus hainanus</name>
    <name type="common">Chinese bird spider</name>
    <name type="synonym">Haplopelma hainanum</name>
    <dbReference type="NCBI Taxonomy" id="209901"/>
    <lineage>
        <taxon>Eukaryota</taxon>
        <taxon>Metazoa</taxon>
        <taxon>Ecdysozoa</taxon>
        <taxon>Arthropoda</taxon>
        <taxon>Chelicerata</taxon>
        <taxon>Arachnida</taxon>
        <taxon>Araneae</taxon>
        <taxon>Mygalomorphae</taxon>
        <taxon>Theraphosidae</taxon>
        <taxon>Haplopelma</taxon>
    </lineage>
</organism>
<sequence length="85" mass="9489">MKMTLIAILTCAAVLVLHTTAAEELEAESQLMEVGMPDTELEAVDEERLFECSVSCEIEKEGDKDCKKKKCKGGWKCKFNMCVKV</sequence>
<proteinExistence type="evidence at transcript level"/>
<reference key="1">
    <citation type="journal article" date="2010" name="J. Proteome Res.">
        <title>Molecular diversification of peptide toxins from the tarantula Haplopelma hainanum (Ornithoctonus hainana) venom based on transcriptomic, peptidomic, and genomic analyses.</title>
        <authorList>
            <person name="Tang X."/>
            <person name="Zhang Y."/>
            <person name="Hu W."/>
            <person name="Xu D."/>
            <person name="Tao H."/>
            <person name="Yang X."/>
            <person name="Li Y."/>
            <person name="Jiang L."/>
            <person name="Liang S."/>
        </authorList>
    </citation>
    <scope>NUCLEOTIDE SEQUENCE [LARGE SCALE MRNA]</scope>
    <source>
        <tissue>Venom gland</tissue>
    </source>
</reference>
<keyword id="KW-1015">Disulfide bond</keyword>
<keyword id="KW-0528">Neurotoxin</keyword>
<keyword id="KW-0629">Postsynaptic neurotoxin</keyword>
<keyword id="KW-0964">Secreted</keyword>
<keyword id="KW-0732">Signal</keyword>
<keyword id="KW-0800">Toxin</keyword>
<dbReference type="EMBL" id="GU292894">
    <property type="protein sequence ID" value="ADB56710.1"/>
    <property type="molecule type" value="mRNA"/>
</dbReference>
<dbReference type="SMR" id="D2Y217"/>
<dbReference type="ArachnoServer" id="AS001857">
    <property type="toxin name" value="U4-theraphotoxin-Hhn1z"/>
</dbReference>
<dbReference type="GO" id="GO:0005576">
    <property type="term" value="C:extracellular region"/>
    <property type="evidence" value="ECO:0007669"/>
    <property type="project" value="UniProtKB-SubCell"/>
</dbReference>
<dbReference type="GO" id="GO:0035792">
    <property type="term" value="C:host cell postsynaptic membrane"/>
    <property type="evidence" value="ECO:0007669"/>
    <property type="project" value="UniProtKB-KW"/>
</dbReference>
<dbReference type="GO" id="GO:0090729">
    <property type="term" value="F:toxin activity"/>
    <property type="evidence" value="ECO:0007669"/>
    <property type="project" value="UniProtKB-KW"/>
</dbReference>
<dbReference type="InterPro" id="IPR012625">
    <property type="entry name" value="Hwtx-2-like"/>
</dbReference>
<dbReference type="Pfam" id="PF08089">
    <property type="entry name" value="Toxin_20"/>
    <property type="match status" value="1"/>
</dbReference>
<dbReference type="SUPFAM" id="SSF57059">
    <property type="entry name" value="omega toxin-like"/>
    <property type="match status" value="1"/>
</dbReference>
<dbReference type="PROSITE" id="PS60022">
    <property type="entry name" value="HWTX_2"/>
    <property type="match status" value="1"/>
</dbReference>
<evidence type="ECO:0000250" key="1"/>
<evidence type="ECO:0000255" key="2"/>
<evidence type="ECO:0000305" key="3"/>
<name>H2F01_CYRHA</name>
<protein>
    <recommendedName>
        <fullName>U4-theraphotoxin-Hhn1z</fullName>
        <shortName>U4-TRTX-Hhn1z</shortName>
    </recommendedName>
    <alternativeName>
        <fullName>Hainantoxin-II-6</fullName>
        <shortName>HNTX-II-6</shortName>
    </alternativeName>
</protein>